<reference key="1">
    <citation type="submission" date="2006-12" db="EMBL/GenBank/DDBJ databases">
        <authorList>
            <person name="Fouts D.E."/>
            <person name="Nelson K.E."/>
            <person name="Sebastian Y."/>
        </authorList>
    </citation>
    <scope>NUCLEOTIDE SEQUENCE [LARGE SCALE GENOMIC DNA]</scope>
    <source>
        <strain>81-176</strain>
    </source>
</reference>
<dbReference type="EC" id="3.1.21.10" evidence="1"/>
<dbReference type="EMBL" id="CP000538">
    <property type="protein sequence ID" value="EAQ71982.2"/>
    <property type="molecule type" value="Genomic_DNA"/>
</dbReference>
<dbReference type="SMR" id="A1W1Y1"/>
<dbReference type="KEGG" id="cjj:CJJ81176_0026"/>
<dbReference type="eggNOG" id="COG0817">
    <property type="taxonomic scope" value="Bacteria"/>
</dbReference>
<dbReference type="HOGENOM" id="CLU_091257_3_0_7"/>
<dbReference type="Proteomes" id="UP000000646">
    <property type="component" value="Chromosome"/>
</dbReference>
<dbReference type="GO" id="GO:0005737">
    <property type="term" value="C:cytoplasm"/>
    <property type="evidence" value="ECO:0007669"/>
    <property type="project" value="UniProtKB-SubCell"/>
</dbReference>
<dbReference type="GO" id="GO:0048476">
    <property type="term" value="C:Holliday junction resolvase complex"/>
    <property type="evidence" value="ECO:0007669"/>
    <property type="project" value="UniProtKB-UniRule"/>
</dbReference>
<dbReference type="GO" id="GO:0008821">
    <property type="term" value="F:crossover junction DNA endonuclease activity"/>
    <property type="evidence" value="ECO:0007669"/>
    <property type="project" value="UniProtKB-UniRule"/>
</dbReference>
<dbReference type="GO" id="GO:0003677">
    <property type="term" value="F:DNA binding"/>
    <property type="evidence" value="ECO:0007669"/>
    <property type="project" value="UniProtKB-KW"/>
</dbReference>
<dbReference type="GO" id="GO:0000287">
    <property type="term" value="F:magnesium ion binding"/>
    <property type="evidence" value="ECO:0007669"/>
    <property type="project" value="UniProtKB-UniRule"/>
</dbReference>
<dbReference type="GO" id="GO:0006310">
    <property type="term" value="P:DNA recombination"/>
    <property type="evidence" value="ECO:0007669"/>
    <property type="project" value="UniProtKB-UniRule"/>
</dbReference>
<dbReference type="GO" id="GO:0006281">
    <property type="term" value="P:DNA repair"/>
    <property type="evidence" value="ECO:0007669"/>
    <property type="project" value="UniProtKB-UniRule"/>
</dbReference>
<dbReference type="CDD" id="cd16962">
    <property type="entry name" value="RuvC"/>
    <property type="match status" value="1"/>
</dbReference>
<dbReference type="FunFam" id="3.30.420.10:FF:000002">
    <property type="entry name" value="Crossover junction endodeoxyribonuclease RuvC"/>
    <property type="match status" value="1"/>
</dbReference>
<dbReference type="Gene3D" id="3.30.420.10">
    <property type="entry name" value="Ribonuclease H-like superfamily/Ribonuclease H"/>
    <property type="match status" value="1"/>
</dbReference>
<dbReference type="HAMAP" id="MF_00034">
    <property type="entry name" value="RuvC"/>
    <property type="match status" value="1"/>
</dbReference>
<dbReference type="InterPro" id="IPR012337">
    <property type="entry name" value="RNaseH-like_sf"/>
</dbReference>
<dbReference type="InterPro" id="IPR036397">
    <property type="entry name" value="RNaseH_sf"/>
</dbReference>
<dbReference type="InterPro" id="IPR020563">
    <property type="entry name" value="X-over_junc_endoDNase_Mg_BS"/>
</dbReference>
<dbReference type="InterPro" id="IPR002176">
    <property type="entry name" value="X-over_junc_endoDNase_RuvC"/>
</dbReference>
<dbReference type="NCBIfam" id="TIGR00228">
    <property type="entry name" value="ruvC"/>
    <property type="match status" value="1"/>
</dbReference>
<dbReference type="PANTHER" id="PTHR30194">
    <property type="entry name" value="CROSSOVER JUNCTION ENDODEOXYRIBONUCLEASE RUVC"/>
    <property type="match status" value="1"/>
</dbReference>
<dbReference type="PANTHER" id="PTHR30194:SF3">
    <property type="entry name" value="CROSSOVER JUNCTION ENDODEOXYRIBONUCLEASE RUVC"/>
    <property type="match status" value="1"/>
</dbReference>
<dbReference type="Pfam" id="PF02075">
    <property type="entry name" value="RuvC"/>
    <property type="match status" value="1"/>
</dbReference>
<dbReference type="PRINTS" id="PR00696">
    <property type="entry name" value="RSOLVASERUVC"/>
</dbReference>
<dbReference type="SUPFAM" id="SSF53098">
    <property type="entry name" value="Ribonuclease H-like"/>
    <property type="match status" value="1"/>
</dbReference>
<dbReference type="PROSITE" id="PS01321">
    <property type="entry name" value="RUVC"/>
    <property type="match status" value="1"/>
</dbReference>
<protein>
    <recommendedName>
        <fullName evidence="1">Crossover junction endodeoxyribonuclease RuvC</fullName>
        <ecNumber evidence="1">3.1.21.10</ecNumber>
    </recommendedName>
    <alternativeName>
        <fullName evidence="1">Holliday junction nuclease RuvC</fullName>
    </alternativeName>
    <alternativeName>
        <fullName evidence="1">Holliday junction resolvase RuvC</fullName>
    </alternativeName>
</protein>
<accession>A1W1Y1</accession>
<comment type="function">
    <text evidence="1">The RuvA-RuvB-RuvC complex processes Holliday junction (HJ) DNA during genetic recombination and DNA repair. Endonuclease that resolves HJ intermediates. Cleaves cruciform DNA by making single-stranded nicks across the HJ at symmetrical positions within the homologous arms, yielding a 5'-phosphate and a 3'-hydroxyl group; requires a central core of homology in the junction. The consensus cleavage sequence is 5'-(A/T)TT(C/G)-3'. Cleavage occurs on the 3'-side of the TT dinucleotide at the point of strand exchange. HJ branch migration catalyzed by RuvA-RuvB allows RuvC to scan DNA until it finds its consensus sequence, where it cleaves and resolves the cruciform DNA.</text>
</comment>
<comment type="catalytic activity">
    <reaction evidence="1">
        <text>Endonucleolytic cleavage at a junction such as a reciprocal single-stranded crossover between two homologous DNA duplexes (Holliday junction).</text>
        <dbReference type="EC" id="3.1.21.10"/>
    </reaction>
</comment>
<comment type="cofactor">
    <cofactor evidence="1">
        <name>Mg(2+)</name>
        <dbReference type="ChEBI" id="CHEBI:18420"/>
    </cofactor>
    <text evidence="1">Binds 2 Mg(2+) ion per subunit.</text>
</comment>
<comment type="subunit">
    <text evidence="1">Homodimer which binds Holliday junction (HJ) DNA. The HJ becomes 2-fold symmetrical on binding to RuvC with unstacked arms; it has a different conformation from HJ DNA in complex with RuvA. In the full resolvosome a probable DNA-RuvA(4)-RuvB(12)-RuvC(2) complex forms which resolves the HJ.</text>
</comment>
<comment type="subcellular location">
    <subcellularLocation>
        <location evidence="1">Cytoplasm</location>
    </subcellularLocation>
</comment>
<comment type="similarity">
    <text evidence="1">Belongs to the RuvC family.</text>
</comment>
<gene>
    <name evidence="1" type="primary">ruvC</name>
    <name type="ordered locus">CJJ81176_0026</name>
</gene>
<organism>
    <name type="scientific">Campylobacter jejuni subsp. jejuni serotype O:23/36 (strain 81-176)</name>
    <dbReference type="NCBI Taxonomy" id="354242"/>
    <lineage>
        <taxon>Bacteria</taxon>
        <taxon>Pseudomonadati</taxon>
        <taxon>Campylobacterota</taxon>
        <taxon>Epsilonproteobacteria</taxon>
        <taxon>Campylobacterales</taxon>
        <taxon>Campylobacteraceae</taxon>
        <taxon>Campylobacter</taxon>
    </lineage>
</organism>
<keyword id="KW-0963">Cytoplasm</keyword>
<keyword id="KW-0227">DNA damage</keyword>
<keyword id="KW-0233">DNA recombination</keyword>
<keyword id="KW-0234">DNA repair</keyword>
<keyword id="KW-0238">DNA-binding</keyword>
<keyword id="KW-0255">Endonuclease</keyword>
<keyword id="KW-0378">Hydrolase</keyword>
<keyword id="KW-0460">Magnesium</keyword>
<keyword id="KW-0479">Metal-binding</keyword>
<keyword id="KW-0540">Nuclease</keyword>
<feature type="chain" id="PRO_1000002741" description="Crossover junction endodeoxyribonuclease RuvC">
    <location>
        <begin position="1"/>
        <end position="160"/>
    </location>
</feature>
<feature type="active site" evidence="1">
    <location>
        <position position="9"/>
    </location>
</feature>
<feature type="active site" evidence="1">
    <location>
        <position position="68"/>
    </location>
</feature>
<feature type="active site" evidence="1">
    <location>
        <position position="141"/>
    </location>
</feature>
<feature type="binding site" evidence="1">
    <location>
        <position position="9"/>
    </location>
    <ligand>
        <name>Mg(2+)</name>
        <dbReference type="ChEBI" id="CHEBI:18420"/>
        <label>1</label>
    </ligand>
</feature>
<feature type="binding site" evidence="1">
    <location>
        <position position="68"/>
    </location>
    <ligand>
        <name>Mg(2+)</name>
        <dbReference type="ChEBI" id="CHEBI:18420"/>
        <label>2</label>
    </ligand>
</feature>
<feature type="binding site" evidence="1">
    <location>
        <position position="141"/>
    </location>
    <ligand>
        <name>Mg(2+)</name>
        <dbReference type="ChEBI" id="CHEBI:18420"/>
        <label>1</label>
    </ligand>
</feature>
<name>RUVC_CAMJJ</name>
<evidence type="ECO:0000255" key="1">
    <source>
        <dbReference type="HAMAP-Rule" id="MF_00034"/>
    </source>
</evidence>
<sequence length="160" mass="17668">MNLKILGIDPGSRNCGYAIMEANKGKNILIEAGLIKIKPSTLQYQITELCEGLDLIFKNHSFDEVAIEDIFFAYNPKTVLKLAQFRGALSLKILQIHGDFAEYTPLQVKKAVTGKAKATKEQVAFMVKRLLGLSKDIKPLDITDAIAVALTHAANLRVRV</sequence>
<proteinExistence type="inferred from homology"/>